<reference key="1">
    <citation type="submission" date="2008-10" db="EMBL/GenBank/DDBJ databases">
        <title>Genome sequence of Ureaplasma urealyticum serovar 10 ATCC-33699.</title>
        <authorList>
            <person name="Shrivastava S."/>
            <person name="Methe B.A."/>
            <person name="Glass J."/>
            <person name="White K."/>
            <person name="Duffy L.B."/>
        </authorList>
    </citation>
    <scope>NUCLEOTIDE SEQUENCE [LARGE SCALE GENOMIC DNA]</scope>
    <source>
        <strain>ATCC 33699 / Western</strain>
    </source>
</reference>
<evidence type="ECO:0000255" key="1">
    <source>
        <dbReference type="HAMAP-Rule" id="MF_01341"/>
    </source>
</evidence>
<evidence type="ECO:0000256" key="2">
    <source>
        <dbReference type="SAM" id="MobiDB-lite"/>
    </source>
</evidence>
<evidence type="ECO:0000305" key="3"/>
<dbReference type="EMBL" id="CP001184">
    <property type="protein sequence ID" value="ACI59893.1"/>
    <property type="molecule type" value="Genomic_DNA"/>
</dbReference>
<dbReference type="RefSeq" id="WP_004027110.1">
    <property type="nucleotide sequence ID" value="NC_011374.1"/>
</dbReference>
<dbReference type="SMR" id="B5ZB58"/>
<dbReference type="STRING" id="565575.UUR10_0244"/>
<dbReference type="KEGG" id="uue:UUR10_0244"/>
<dbReference type="eggNOG" id="COG0200">
    <property type="taxonomic scope" value="Bacteria"/>
</dbReference>
<dbReference type="HOGENOM" id="CLU_055188_4_2_14"/>
<dbReference type="OrthoDB" id="9810293at2"/>
<dbReference type="Proteomes" id="UP000002018">
    <property type="component" value="Chromosome"/>
</dbReference>
<dbReference type="GO" id="GO:0022625">
    <property type="term" value="C:cytosolic large ribosomal subunit"/>
    <property type="evidence" value="ECO:0007669"/>
    <property type="project" value="TreeGrafter"/>
</dbReference>
<dbReference type="GO" id="GO:0019843">
    <property type="term" value="F:rRNA binding"/>
    <property type="evidence" value="ECO:0007669"/>
    <property type="project" value="UniProtKB-UniRule"/>
</dbReference>
<dbReference type="GO" id="GO:0003735">
    <property type="term" value="F:structural constituent of ribosome"/>
    <property type="evidence" value="ECO:0007669"/>
    <property type="project" value="InterPro"/>
</dbReference>
<dbReference type="GO" id="GO:0006412">
    <property type="term" value="P:translation"/>
    <property type="evidence" value="ECO:0007669"/>
    <property type="project" value="UniProtKB-UniRule"/>
</dbReference>
<dbReference type="Gene3D" id="3.100.10.10">
    <property type="match status" value="1"/>
</dbReference>
<dbReference type="HAMAP" id="MF_01341">
    <property type="entry name" value="Ribosomal_uL15"/>
    <property type="match status" value="1"/>
</dbReference>
<dbReference type="InterPro" id="IPR030878">
    <property type="entry name" value="Ribosomal_uL15"/>
</dbReference>
<dbReference type="InterPro" id="IPR036227">
    <property type="entry name" value="Ribosomal_uL15/eL18_sf"/>
</dbReference>
<dbReference type="InterPro" id="IPR005749">
    <property type="entry name" value="Ribosomal_uL15_bac-type"/>
</dbReference>
<dbReference type="NCBIfam" id="TIGR01071">
    <property type="entry name" value="rplO_bact"/>
    <property type="match status" value="1"/>
</dbReference>
<dbReference type="PANTHER" id="PTHR12934">
    <property type="entry name" value="50S RIBOSOMAL PROTEIN L15"/>
    <property type="match status" value="1"/>
</dbReference>
<dbReference type="PANTHER" id="PTHR12934:SF11">
    <property type="entry name" value="LARGE RIBOSOMAL SUBUNIT PROTEIN UL15M"/>
    <property type="match status" value="1"/>
</dbReference>
<dbReference type="SUPFAM" id="SSF52080">
    <property type="entry name" value="Ribosomal proteins L15p and L18e"/>
    <property type="match status" value="1"/>
</dbReference>
<comment type="function">
    <text evidence="1">Binds to the 23S rRNA.</text>
</comment>
<comment type="subunit">
    <text evidence="1">Part of the 50S ribosomal subunit.</text>
</comment>
<comment type="similarity">
    <text evidence="1">Belongs to the universal ribosomal protein uL15 family.</text>
</comment>
<gene>
    <name evidence="1" type="primary">rplO</name>
    <name type="ordered locus">UUR10_0244</name>
</gene>
<name>RL15_UREU1</name>
<accession>B5ZB58</accession>
<keyword id="KW-0687">Ribonucleoprotein</keyword>
<keyword id="KW-0689">Ribosomal protein</keyword>
<keyword id="KW-0694">RNA-binding</keyword>
<keyword id="KW-0699">rRNA-binding</keyword>
<feature type="chain" id="PRO_1000142898" description="Large ribosomal subunit protein uL15">
    <location>
        <begin position="1"/>
        <end position="148"/>
    </location>
</feature>
<feature type="region of interest" description="Disordered" evidence="2">
    <location>
        <begin position="1"/>
        <end position="42"/>
    </location>
</feature>
<feature type="compositionally biased region" description="Basic and acidic residues" evidence="2">
    <location>
        <begin position="1"/>
        <end position="10"/>
    </location>
</feature>
<feature type="compositionally biased region" description="Basic residues" evidence="2">
    <location>
        <begin position="11"/>
        <end position="22"/>
    </location>
</feature>
<feature type="compositionally biased region" description="Gly residues" evidence="2">
    <location>
        <begin position="23"/>
        <end position="36"/>
    </location>
</feature>
<protein>
    <recommendedName>
        <fullName evidence="1">Large ribosomal subunit protein uL15</fullName>
    </recommendedName>
    <alternativeName>
        <fullName evidence="3">50S ribosomal protein L15</fullName>
    </alternativeName>
</protein>
<organism>
    <name type="scientific">Ureaplasma urealyticum serovar 10 (strain ATCC 33699 / Western)</name>
    <dbReference type="NCBI Taxonomy" id="565575"/>
    <lineage>
        <taxon>Bacteria</taxon>
        <taxon>Bacillati</taxon>
        <taxon>Mycoplasmatota</taxon>
        <taxon>Mycoplasmoidales</taxon>
        <taxon>Mycoplasmoidaceae</taxon>
        <taxon>Ureaplasma</taxon>
    </lineage>
</organism>
<sequence>MQLHNLEYKKGSRNHKEKRVGRGHGSGLGKTSGRGQDGQKARKSGMVRLAFEGGQTPLYRRVPKVGFNNDRFANKYNVVTLISLVKYETKELTAEFMYVNKIAKNEDLPIKVIGNAVLPSGTVVSAHKFSKGALESISNSKAKAQILE</sequence>
<proteinExistence type="inferred from homology"/>